<evidence type="ECO:0000250" key="1">
    <source>
        <dbReference type="UniProtKB" id="E9F648"/>
    </source>
</evidence>
<evidence type="ECO:0000250" key="2">
    <source>
        <dbReference type="UniProtKB" id="E9RBR0"/>
    </source>
</evidence>
<evidence type="ECO:0000250" key="3">
    <source>
        <dbReference type="UniProtKB" id="Q70KY3"/>
    </source>
</evidence>
<evidence type="ECO:0000255" key="4"/>
<evidence type="ECO:0000255" key="5">
    <source>
        <dbReference type="PROSITE-ProRule" id="PRU00498"/>
    </source>
</evidence>
<evidence type="ECO:0000269" key="6">
    <source>
    </source>
</evidence>
<evidence type="ECO:0000303" key="7">
    <source>
    </source>
</evidence>
<evidence type="ECO:0000305" key="8"/>
<evidence type="ECO:0000305" key="9">
    <source>
    </source>
</evidence>
<keyword id="KW-0186">Copper</keyword>
<keyword id="KW-0325">Glycoprotein</keyword>
<keyword id="KW-0479">Metal-binding</keyword>
<keyword id="KW-0560">Oxidoreductase</keyword>
<keyword id="KW-1185">Reference proteome</keyword>
<keyword id="KW-0677">Repeat</keyword>
<keyword id="KW-0732">Signal</keyword>
<accession>E9E686</accession>
<name>MLAC1_METAQ</name>
<gene>
    <name evidence="1" type="primary">Mlac1</name>
    <name evidence="7" type="synonym">Abr2</name>
    <name type="ORF">MAC_05384</name>
</gene>
<proteinExistence type="inferred from homology"/>
<comment type="function">
    <text evidence="6 9">Laccase; part of the Pks1 gene cluster that mediates the biosynthesis of an anthraquinone derivative pigment that contributes to conidial pigmentation that provides protection from UV radiation, heat and cold stress (PubMed:29958281). The polyketide synthase Pks1 produces 1-acetyl-2,4,6,8-tetrahydroxy-9,10-anthraquinone though condensation of acetyl-CoA with malonyl-CoA (Probable). The dehydratase EthD and the laccase Mlac1 further convert the anthraquinone derivative into the final conidial pigment (Probable).</text>
</comment>
<comment type="cofactor">
    <cofactor evidence="3">
        <name>Cu cation</name>
        <dbReference type="ChEBI" id="CHEBI:23378"/>
    </cofactor>
    <text evidence="3">Binds 4 Cu cations per monomer.</text>
</comment>
<comment type="pathway">
    <text evidence="9">Pigment biosynthesis.</text>
</comment>
<comment type="subcellular location">
    <subcellularLocation>
        <location evidence="2">Cell surface</location>
    </subcellularLocation>
</comment>
<comment type="similarity">
    <text evidence="8">Belongs to the multicopper oxidase family.</text>
</comment>
<comment type="sequence caution" evidence="8">
    <conflict type="erroneous gene model prediction">
        <sequence resource="EMBL-CDS" id="EFY88619"/>
    </conflict>
</comment>
<feature type="signal peptide" evidence="4">
    <location>
        <begin position="1"/>
        <end position="20"/>
    </location>
</feature>
<feature type="chain" id="PRO_0000445735" description="Laccase 1">
    <location>
        <begin position="21"/>
        <end position="613"/>
    </location>
</feature>
<feature type="domain" description="Plastocyanin-like 1" evidence="4">
    <location>
        <begin position="29"/>
        <end position="142"/>
    </location>
</feature>
<feature type="domain" description="Plastocyanin-like 2" evidence="4">
    <location>
        <begin position="171"/>
        <end position="359"/>
    </location>
</feature>
<feature type="domain" description="Plastocyanin-like 3" evidence="4">
    <location>
        <begin position="468"/>
        <end position="598"/>
    </location>
</feature>
<feature type="binding site" evidence="3">
    <location>
        <position position="78"/>
    </location>
    <ligand>
        <name>Cu cation</name>
        <dbReference type="ChEBI" id="CHEBI:23378"/>
        <label>1</label>
    </ligand>
</feature>
<feature type="binding site" evidence="3">
    <location>
        <position position="80"/>
    </location>
    <ligand>
        <name>Cu cation</name>
        <dbReference type="ChEBI" id="CHEBI:23378"/>
        <label>2</label>
    </ligand>
</feature>
<feature type="binding site" evidence="3">
    <location>
        <position position="122"/>
    </location>
    <ligand>
        <name>Cu cation</name>
        <dbReference type="ChEBI" id="CHEBI:23378"/>
        <label>2</label>
    </ligand>
</feature>
<feature type="binding site" evidence="3">
    <location>
        <position position="124"/>
    </location>
    <ligand>
        <name>Cu cation</name>
        <dbReference type="ChEBI" id="CHEBI:23378"/>
        <label>3</label>
    </ligand>
</feature>
<feature type="binding site" evidence="3">
    <location>
        <position position="506"/>
    </location>
    <ligand>
        <name>Cu cation</name>
        <dbReference type="ChEBI" id="CHEBI:23378"/>
        <label>4</label>
    </ligand>
</feature>
<feature type="binding site" evidence="3">
    <location>
        <position position="509"/>
    </location>
    <ligand>
        <name>Cu cation</name>
        <dbReference type="ChEBI" id="CHEBI:23378"/>
        <label>1</label>
    </ligand>
</feature>
<feature type="binding site" evidence="3">
    <location>
        <position position="509"/>
    </location>
    <ligand>
        <name>Cu cation</name>
        <dbReference type="ChEBI" id="CHEBI:23378"/>
        <label>4</label>
    </ligand>
</feature>
<feature type="binding site" evidence="3">
    <location>
        <position position="511"/>
    </location>
    <ligand>
        <name>Cu cation</name>
        <dbReference type="ChEBI" id="CHEBI:23378"/>
        <label>3</label>
    </ligand>
</feature>
<feature type="binding site" evidence="3">
    <location>
        <position position="580"/>
    </location>
    <ligand>
        <name>Cu cation</name>
        <dbReference type="ChEBI" id="CHEBI:23378"/>
        <label>3</label>
    </ligand>
</feature>
<feature type="binding site" evidence="3">
    <location>
        <position position="581"/>
    </location>
    <ligand>
        <name>Cu cation</name>
        <dbReference type="ChEBI" id="CHEBI:23378"/>
        <label>4</label>
    </ligand>
</feature>
<feature type="binding site" evidence="3">
    <location>
        <position position="582"/>
    </location>
    <ligand>
        <name>Cu cation</name>
        <dbReference type="ChEBI" id="CHEBI:23378"/>
        <label>2</label>
    </ligand>
</feature>
<feature type="binding site" evidence="3">
    <location>
        <position position="586"/>
    </location>
    <ligand>
        <name>Cu cation</name>
        <dbReference type="ChEBI" id="CHEBI:23378"/>
        <label>4</label>
    </ligand>
</feature>
<feature type="glycosylation site" description="N-linked (GlcNAc...) asparagine" evidence="5">
    <location>
        <position position="74"/>
    </location>
</feature>
<feature type="glycosylation site" description="N-linked (GlcNAc...) asparagine" evidence="5">
    <location>
        <position position="256"/>
    </location>
</feature>
<feature type="glycosylation site" description="N-linked (GlcNAc...) asparagine" evidence="5">
    <location>
        <position position="279"/>
    </location>
</feature>
<feature type="glycosylation site" description="N-linked (GlcNAc...) asparagine" evidence="5">
    <location>
        <position position="484"/>
    </location>
</feature>
<feature type="glycosylation site" description="N-linked (GlcNAc...) asparagine" evidence="5">
    <location>
        <position position="526"/>
    </location>
</feature>
<sequence>MSSSVRLLLIVALLYTNSWAKTVKETLRITWEEGAPNGQARELIYTNGQFPGPPLIWDEGDDVEVTVWNEMAKNVTVHWHGLDQKDSPWSDGTPGLSQRPIQPGQSFVYKFKASPPGNHWYHSHEKMSLVDGLYGAIHIRPKEDRTGLWSQISQDKEDIKAMEKAARDPEYLVVSDWSQYTSEEYWKMSTDSGLLVFCLDSILVNGKGEVYCPGQEFLQKELAPGLVQDAFPPGTEVSDKGCFPADLDQVQGGPWNITKRPDLIPPRVQEGCVASKHENETIVVDPHRNNGWVSMHIVAAATIAQIAFSVDSHEFWLYEIDGNYVNPKKFVSAVMSAGETFSIMMKLDQEPGRYTMRVPNSGASQVLGAFAEMVYEGHERAEKSGRAYLSYGGNPTSPDVEKNSFFPWQLDTDHMSPWPANKPRPGKADEEHLLVLGRVGAPYKYTMNTKYLYPVDFQNNDPLLFYPDATCGTENDGLVLRTKNGSWVDLILQVSTLPGDTSSFEHFMHKHGSKTWRIGFGTGVWNYTSVEEAIQERPQDFNLETPGLRDTWITAFSIGGEAYWSVFRYYVDNPGPWLFHCHIELHLMGGMGIAILDGVDAWPEHIPEEYRLD</sequence>
<dbReference type="EC" id="1.10.3.-" evidence="9"/>
<dbReference type="EMBL" id="GL698509">
    <property type="protein sequence ID" value="EFY88619.1"/>
    <property type="status" value="ALT_SEQ"/>
    <property type="molecule type" value="Genomic_DNA"/>
</dbReference>
<dbReference type="RefSeq" id="XP_007811724.1">
    <property type="nucleotide sequence ID" value="XM_007813533.1"/>
</dbReference>
<dbReference type="SMR" id="E9E686"/>
<dbReference type="STRING" id="655827.E9E686"/>
<dbReference type="GlyCosmos" id="E9E686">
    <property type="glycosylation" value="5 sites, No reported glycans"/>
</dbReference>
<dbReference type="eggNOG" id="KOG1263">
    <property type="taxonomic scope" value="Eukaryota"/>
</dbReference>
<dbReference type="HOGENOM" id="CLU_006504_5_0_1"/>
<dbReference type="InParanoid" id="E9E686"/>
<dbReference type="OrthoDB" id="2121828at2759"/>
<dbReference type="Proteomes" id="UP000002499">
    <property type="component" value="Unassembled WGS sequence"/>
</dbReference>
<dbReference type="GO" id="GO:0009986">
    <property type="term" value="C:cell surface"/>
    <property type="evidence" value="ECO:0007669"/>
    <property type="project" value="UniProtKB-SubCell"/>
</dbReference>
<dbReference type="GO" id="GO:0005507">
    <property type="term" value="F:copper ion binding"/>
    <property type="evidence" value="ECO:0007669"/>
    <property type="project" value="InterPro"/>
</dbReference>
<dbReference type="GO" id="GO:0016491">
    <property type="term" value="F:oxidoreductase activity"/>
    <property type="evidence" value="ECO:0007669"/>
    <property type="project" value="UniProtKB-KW"/>
</dbReference>
<dbReference type="CDD" id="cd13850">
    <property type="entry name" value="CuRO_1_Abr2_like"/>
    <property type="match status" value="1"/>
</dbReference>
<dbReference type="CDD" id="cd13876">
    <property type="entry name" value="CuRO_2_Abr2_like"/>
    <property type="match status" value="1"/>
</dbReference>
<dbReference type="CDD" id="cd13898">
    <property type="entry name" value="CuRO_3_Abr2_like"/>
    <property type="match status" value="1"/>
</dbReference>
<dbReference type="FunFam" id="2.60.40.420:FF:000036">
    <property type="entry name" value="L-ascorbate oxidase"/>
    <property type="match status" value="1"/>
</dbReference>
<dbReference type="Gene3D" id="2.60.40.420">
    <property type="entry name" value="Cupredoxins - blue copper proteins"/>
    <property type="match status" value="3"/>
</dbReference>
<dbReference type="InterPro" id="IPR011707">
    <property type="entry name" value="Cu-oxidase-like_N"/>
</dbReference>
<dbReference type="InterPro" id="IPR001117">
    <property type="entry name" value="Cu-oxidase_2nd"/>
</dbReference>
<dbReference type="InterPro" id="IPR011706">
    <property type="entry name" value="Cu-oxidase_C"/>
</dbReference>
<dbReference type="InterPro" id="IPR045087">
    <property type="entry name" value="Cu-oxidase_fam"/>
</dbReference>
<dbReference type="InterPro" id="IPR033138">
    <property type="entry name" value="Cu_oxidase_CS"/>
</dbReference>
<dbReference type="InterPro" id="IPR002355">
    <property type="entry name" value="Cu_oxidase_Cu_BS"/>
</dbReference>
<dbReference type="InterPro" id="IPR008972">
    <property type="entry name" value="Cupredoxin"/>
</dbReference>
<dbReference type="PANTHER" id="PTHR11709:SF488">
    <property type="entry name" value="LACCASE-RELATED"/>
    <property type="match status" value="1"/>
</dbReference>
<dbReference type="PANTHER" id="PTHR11709">
    <property type="entry name" value="MULTI-COPPER OXIDASE"/>
    <property type="match status" value="1"/>
</dbReference>
<dbReference type="Pfam" id="PF00394">
    <property type="entry name" value="Cu-oxidase"/>
    <property type="match status" value="1"/>
</dbReference>
<dbReference type="Pfam" id="PF07731">
    <property type="entry name" value="Cu-oxidase_2"/>
    <property type="match status" value="1"/>
</dbReference>
<dbReference type="Pfam" id="PF07732">
    <property type="entry name" value="Cu-oxidase_3"/>
    <property type="match status" value="1"/>
</dbReference>
<dbReference type="SUPFAM" id="SSF49503">
    <property type="entry name" value="Cupredoxins"/>
    <property type="match status" value="3"/>
</dbReference>
<dbReference type="PROSITE" id="PS00079">
    <property type="entry name" value="MULTICOPPER_OXIDASE1"/>
    <property type="match status" value="1"/>
</dbReference>
<dbReference type="PROSITE" id="PS00080">
    <property type="entry name" value="MULTICOPPER_OXIDASE2"/>
    <property type="match status" value="1"/>
</dbReference>
<protein>
    <recommendedName>
        <fullName evidence="1">Laccase 1</fullName>
        <ecNumber evidence="9">1.10.3.-</ecNumber>
    </recommendedName>
    <alternativeName>
        <fullName evidence="1">Conidial pigment biosynthesis oxidase Mlac1</fullName>
    </alternativeName>
</protein>
<organism>
    <name type="scientific">Metarhizium acridum (strain CQMa 102)</name>
    <dbReference type="NCBI Taxonomy" id="655827"/>
    <lineage>
        <taxon>Eukaryota</taxon>
        <taxon>Fungi</taxon>
        <taxon>Dikarya</taxon>
        <taxon>Ascomycota</taxon>
        <taxon>Pezizomycotina</taxon>
        <taxon>Sordariomycetes</taxon>
        <taxon>Hypocreomycetidae</taxon>
        <taxon>Hypocreales</taxon>
        <taxon>Clavicipitaceae</taxon>
        <taxon>Metarhizium</taxon>
    </lineage>
</organism>
<reference key="1">
    <citation type="journal article" date="2011" name="PLoS Genet.">
        <title>Genome sequencing and comparative transcriptomics of the model entomopathogenic fungi Metarhizium anisopliae and M. acridum.</title>
        <authorList>
            <person name="Gao Q."/>
            <person name="Jin K."/>
            <person name="Ying S.-H."/>
            <person name="Zhang Y."/>
            <person name="Xiao G."/>
            <person name="Shang Y."/>
            <person name="Duan Z."/>
            <person name="Hu X."/>
            <person name="Xie X.-Q."/>
            <person name="Zhou G."/>
            <person name="Peng G."/>
            <person name="Luo Z."/>
            <person name="Huang W."/>
            <person name="Wang B."/>
            <person name="Fang W."/>
            <person name="Wang S."/>
            <person name="Zhong Y."/>
            <person name="Ma L.-J."/>
            <person name="St Leger R.J."/>
            <person name="Zhao G.-P."/>
            <person name="Pei Y."/>
            <person name="Feng M.-G."/>
            <person name="Xia Y."/>
            <person name="Wang C."/>
        </authorList>
    </citation>
    <scope>NUCLEOTIDE SEQUENCE [LARGE SCALE GENOMIC DNA]</scope>
    <source>
        <strain>CQMa 102</strain>
    </source>
</reference>
<reference key="2">
    <citation type="journal article" date="2018" name="PLoS Genet.">
        <title>Duplication of a Pks gene cluster and subsequent functional diversification facilitate environmental adaptation in Metarhizium species.</title>
        <authorList>
            <person name="Zeng G."/>
            <person name="Zhang P."/>
            <person name="Zhang Q."/>
            <person name="Zhao H."/>
            <person name="Li Z."/>
            <person name="Zhang X."/>
            <person name="Wang C."/>
            <person name="Yin W.B."/>
            <person name="Fang W."/>
        </authorList>
    </citation>
    <scope>IDENTIFICATION</scope>
    <scope>FUNCTION</scope>
    <scope>PATHWAY</scope>
</reference>